<gene>
    <name type="primary">NDHK</name>
</gene>
<proteinExistence type="inferred from homology"/>
<name>NDUS7_TRYBB</name>
<dbReference type="EC" id="7.1.1.2"/>
<dbReference type="EMBL" id="L00585">
    <property type="protein sequence ID" value="AAA30217.1"/>
    <property type="molecule type" value="Genomic_DNA"/>
</dbReference>
<dbReference type="SMR" id="Q26783"/>
<dbReference type="GO" id="GO:0005739">
    <property type="term" value="C:mitochondrion"/>
    <property type="evidence" value="ECO:0007669"/>
    <property type="project" value="UniProtKB-SubCell"/>
</dbReference>
<dbReference type="GO" id="GO:0045271">
    <property type="term" value="C:respiratory chain complex I"/>
    <property type="evidence" value="ECO:0007669"/>
    <property type="project" value="TreeGrafter"/>
</dbReference>
<dbReference type="GO" id="GO:0051539">
    <property type="term" value="F:4 iron, 4 sulfur cluster binding"/>
    <property type="evidence" value="ECO:0007669"/>
    <property type="project" value="UniProtKB-KW"/>
</dbReference>
<dbReference type="GO" id="GO:0046872">
    <property type="term" value="F:metal ion binding"/>
    <property type="evidence" value="ECO:0007669"/>
    <property type="project" value="UniProtKB-KW"/>
</dbReference>
<dbReference type="GO" id="GO:0008137">
    <property type="term" value="F:NADH dehydrogenase (ubiquinone) activity"/>
    <property type="evidence" value="ECO:0007669"/>
    <property type="project" value="UniProtKB-EC"/>
</dbReference>
<dbReference type="GO" id="GO:0048038">
    <property type="term" value="F:quinone binding"/>
    <property type="evidence" value="ECO:0007669"/>
    <property type="project" value="InterPro"/>
</dbReference>
<dbReference type="GO" id="GO:0009060">
    <property type="term" value="P:aerobic respiration"/>
    <property type="evidence" value="ECO:0007669"/>
    <property type="project" value="TreeGrafter"/>
</dbReference>
<dbReference type="GO" id="GO:0015990">
    <property type="term" value="P:electron transport coupled proton transport"/>
    <property type="evidence" value="ECO:0007669"/>
    <property type="project" value="TreeGrafter"/>
</dbReference>
<dbReference type="GO" id="GO:0032981">
    <property type="term" value="P:mitochondrial respiratory chain complex I assembly"/>
    <property type="evidence" value="ECO:0007669"/>
    <property type="project" value="TreeGrafter"/>
</dbReference>
<dbReference type="FunFam" id="3.40.50.12280:FF:000006">
    <property type="entry name" value="NADH-ubiquinone oxidoreductase 20 kDa subunit,mitochondrial"/>
    <property type="match status" value="1"/>
</dbReference>
<dbReference type="Gene3D" id="3.40.50.12280">
    <property type="match status" value="1"/>
</dbReference>
<dbReference type="InterPro" id="IPR006137">
    <property type="entry name" value="NADH_UbQ_OxRdtase-like_20kDa"/>
</dbReference>
<dbReference type="InterPro" id="IPR006138">
    <property type="entry name" value="NADH_UQ_OxRdtase_20Kd_su"/>
</dbReference>
<dbReference type="NCBIfam" id="TIGR01957">
    <property type="entry name" value="nuoB_fam"/>
    <property type="match status" value="1"/>
</dbReference>
<dbReference type="NCBIfam" id="NF005012">
    <property type="entry name" value="PRK06411.1"/>
    <property type="match status" value="1"/>
</dbReference>
<dbReference type="PANTHER" id="PTHR11995">
    <property type="entry name" value="NADH DEHYDROGENASE"/>
    <property type="match status" value="1"/>
</dbReference>
<dbReference type="PANTHER" id="PTHR11995:SF14">
    <property type="entry name" value="NADH DEHYDROGENASE [UBIQUINONE] IRON-SULFUR PROTEIN 7, MITOCHONDRIAL"/>
    <property type="match status" value="1"/>
</dbReference>
<dbReference type="Pfam" id="PF01058">
    <property type="entry name" value="Oxidored_q6"/>
    <property type="match status" value="1"/>
</dbReference>
<dbReference type="SUPFAM" id="SSF56770">
    <property type="entry name" value="HydA/Nqo6-like"/>
    <property type="match status" value="1"/>
</dbReference>
<dbReference type="PROSITE" id="PS01150">
    <property type="entry name" value="COMPLEX1_20K"/>
    <property type="match status" value="1"/>
</dbReference>
<evidence type="ECO:0000250" key="1"/>
<evidence type="ECO:0000255" key="2"/>
<evidence type="ECO:0000305" key="3"/>
<protein>
    <recommendedName>
        <fullName>NADH dehydrogenase [ubiquinone] iron-sulfur protein 7, mitochondrial</fullName>
        <ecNumber>7.1.1.2</ecNumber>
    </recommendedName>
    <alternativeName>
        <fullName>Complex I-20kD</fullName>
        <shortName>CI-20kD</shortName>
    </alternativeName>
    <alternativeName>
        <fullName>NADH-ubiquinone oxidoreductase 20 kDa subunit</fullName>
    </alternativeName>
</protein>
<keyword id="KW-0004">4Fe-4S</keyword>
<keyword id="KW-0249">Electron transport</keyword>
<keyword id="KW-0408">Iron</keyword>
<keyword id="KW-0411">Iron-sulfur</keyword>
<keyword id="KW-0479">Metal-binding</keyword>
<keyword id="KW-0496">Mitochondrion</keyword>
<keyword id="KW-0520">NAD</keyword>
<keyword id="KW-0560">Oxidoreductase</keyword>
<keyword id="KW-0679">Respiratory chain</keyword>
<keyword id="KW-0809">Transit peptide</keyword>
<keyword id="KW-1278">Translocase</keyword>
<keyword id="KW-0813">Transport</keyword>
<keyword id="KW-0830">Ubiquinone</keyword>
<reference key="1">
    <citation type="journal article" date="1993" name="Mol. Biochem. Parasitol.">
        <title>Characterization of a Trypanosoma brucei nuclear gene encoding a protein homologous to a subunit of bovine NADH:ubiquinone oxidoreductase (complex I).</title>
        <authorList>
            <person name="Peterson G.C."/>
            <person name="Souza A.E."/>
            <person name="Parsons M."/>
        </authorList>
    </citation>
    <scope>NUCLEOTIDE SEQUENCE [GENOMIC DNA]</scope>
    <source>
        <strain>EATRO 164</strain>
    </source>
</reference>
<accession>Q26783</accession>
<sequence length="202" mass="23077">MLRRTSFNFTGRAMISRGSPEWSHRLDLKKGKKTTMMHKLGTSKPNNALQYAQMTLHDLTEWCLAYSPWPLTFGLACCAVEMMHAYASRYDLDRFGIVPRPTPRQAEIIIVSGTVTNKMAPILRNIYVQMVNPKWVISMGSCANGGGYYHFSYAVLRGCERAIPVDFWIPGCPPSAESLVFCLHTLQKKIRWHEIQKYSVRD</sequence>
<organism>
    <name type="scientific">Trypanosoma brucei brucei</name>
    <dbReference type="NCBI Taxonomy" id="5702"/>
    <lineage>
        <taxon>Eukaryota</taxon>
        <taxon>Discoba</taxon>
        <taxon>Euglenozoa</taxon>
        <taxon>Kinetoplastea</taxon>
        <taxon>Metakinetoplastina</taxon>
        <taxon>Trypanosomatida</taxon>
        <taxon>Trypanosomatidae</taxon>
        <taxon>Trypanosoma</taxon>
    </lineage>
</organism>
<comment type="function">
    <text evidence="1">Core subunit of the mitochondrial membrane respiratory chain NADH dehydrogenase (Complex I) that is believed to belong to the minimal assembly required for catalysis. Complex I functions in the transfer of electrons from NADH to the respiratory chain. The immediate electron acceptor for the enzyme is believed to be ubiquinone (By similarity).</text>
</comment>
<comment type="catalytic activity">
    <reaction>
        <text>a ubiquinone + NADH + 5 H(+)(in) = a ubiquinol + NAD(+) + 4 H(+)(out)</text>
        <dbReference type="Rhea" id="RHEA:29091"/>
        <dbReference type="Rhea" id="RHEA-COMP:9565"/>
        <dbReference type="Rhea" id="RHEA-COMP:9566"/>
        <dbReference type="ChEBI" id="CHEBI:15378"/>
        <dbReference type="ChEBI" id="CHEBI:16389"/>
        <dbReference type="ChEBI" id="CHEBI:17976"/>
        <dbReference type="ChEBI" id="CHEBI:57540"/>
        <dbReference type="ChEBI" id="CHEBI:57945"/>
        <dbReference type="EC" id="7.1.1.2"/>
    </reaction>
</comment>
<comment type="cofactor">
    <cofactor evidence="1">
        <name>[4Fe-4S] cluster</name>
        <dbReference type="ChEBI" id="CHEBI:49883"/>
    </cofactor>
    <text evidence="1">Binds 1 [4Fe-4S] cluster.</text>
</comment>
<comment type="subunit">
    <text evidence="1">Complex I is composed of 45 different subunits This is a component of the iron-sulfur (IP) fragment of the enzyme.</text>
</comment>
<comment type="subcellular location">
    <subcellularLocation>
        <location evidence="1">Mitochondrion</location>
    </subcellularLocation>
</comment>
<comment type="similarity">
    <text evidence="3">Belongs to the complex I 20 kDa subunit family.</text>
</comment>
<feature type="transit peptide" description="Mitochondrion" evidence="2">
    <location>
        <begin position="1"/>
        <end position="56"/>
    </location>
</feature>
<feature type="chain" id="PRO_0000020031" description="NADH dehydrogenase [ubiquinone] iron-sulfur protein 7, mitochondrial">
    <location>
        <begin position="57"/>
        <end position="202"/>
    </location>
</feature>
<feature type="binding site" evidence="2">
    <location>
        <position position="77"/>
    </location>
    <ligand>
        <name>[4Fe-4S] cluster</name>
        <dbReference type="ChEBI" id="CHEBI:49883"/>
    </ligand>
</feature>
<feature type="binding site" evidence="2">
    <location>
        <position position="78"/>
    </location>
    <ligand>
        <name>[4Fe-4S] cluster</name>
        <dbReference type="ChEBI" id="CHEBI:49883"/>
    </ligand>
</feature>
<feature type="binding site" evidence="2">
    <location>
        <position position="142"/>
    </location>
    <ligand>
        <name>[4Fe-4S] cluster</name>
        <dbReference type="ChEBI" id="CHEBI:49883"/>
    </ligand>
</feature>
<feature type="binding site" evidence="2">
    <location>
        <position position="172"/>
    </location>
    <ligand>
        <name>[4Fe-4S] cluster</name>
        <dbReference type="ChEBI" id="CHEBI:49883"/>
    </ligand>
</feature>